<dbReference type="EMBL" id="CP000859">
    <property type="protein sequence ID" value="ABW68010.1"/>
    <property type="molecule type" value="Genomic_DNA"/>
</dbReference>
<dbReference type="RefSeq" id="WP_012175622.1">
    <property type="nucleotide sequence ID" value="NC_009943.1"/>
</dbReference>
<dbReference type="SMR" id="A8ZUH8"/>
<dbReference type="STRING" id="96561.Dole_2206"/>
<dbReference type="KEGG" id="dol:Dole_2206"/>
<dbReference type="eggNOG" id="COG0632">
    <property type="taxonomic scope" value="Bacteria"/>
</dbReference>
<dbReference type="HOGENOM" id="CLU_087936_3_0_7"/>
<dbReference type="OrthoDB" id="5293449at2"/>
<dbReference type="Proteomes" id="UP000008561">
    <property type="component" value="Chromosome"/>
</dbReference>
<dbReference type="GO" id="GO:0005737">
    <property type="term" value="C:cytoplasm"/>
    <property type="evidence" value="ECO:0007669"/>
    <property type="project" value="UniProtKB-SubCell"/>
</dbReference>
<dbReference type="GO" id="GO:0009379">
    <property type="term" value="C:Holliday junction helicase complex"/>
    <property type="evidence" value="ECO:0007669"/>
    <property type="project" value="InterPro"/>
</dbReference>
<dbReference type="GO" id="GO:0048476">
    <property type="term" value="C:Holliday junction resolvase complex"/>
    <property type="evidence" value="ECO:0007669"/>
    <property type="project" value="UniProtKB-UniRule"/>
</dbReference>
<dbReference type="GO" id="GO:0005524">
    <property type="term" value="F:ATP binding"/>
    <property type="evidence" value="ECO:0007669"/>
    <property type="project" value="InterPro"/>
</dbReference>
<dbReference type="GO" id="GO:0000400">
    <property type="term" value="F:four-way junction DNA binding"/>
    <property type="evidence" value="ECO:0007669"/>
    <property type="project" value="UniProtKB-UniRule"/>
</dbReference>
<dbReference type="GO" id="GO:0009378">
    <property type="term" value="F:four-way junction helicase activity"/>
    <property type="evidence" value="ECO:0007669"/>
    <property type="project" value="InterPro"/>
</dbReference>
<dbReference type="GO" id="GO:0006310">
    <property type="term" value="P:DNA recombination"/>
    <property type="evidence" value="ECO:0007669"/>
    <property type="project" value="UniProtKB-UniRule"/>
</dbReference>
<dbReference type="GO" id="GO:0006281">
    <property type="term" value="P:DNA repair"/>
    <property type="evidence" value="ECO:0007669"/>
    <property type="project" value="UniProtKB-UniRule"/>
</dbReference>
<dbReference type="CDD" id="cd14332">
    <property type="entry name" value="UBA_RuvA_C"/>
    <property type="match status" value="1"/>
</dbReference>
<dbReference type="Gene3D" id="1.10.150.20">
    <property type="entry name" value="5' to 3' exonuclease, C-terminal subdomain"/>
    <property type="match status" value="1"/>
</dbReference>
<dbReference type="Gene3D" id="2.40.50.140">
    <property type="entry name" value="Nucleic acid-binding proteins"/>
    <property type="match status" value="1"/>
</dbReference>
<dbReference type="HAMAP" id="MF_00031">
    <property type="entry name" value="DNA_HJ_migration_RuvA"/>
    <property type="match status" value="1"/>
</dbReference>
<dbReference type="InterPro" id="IPR013849">
    <property type="entry name" value="DNA_helicase_Holl-junc_RuvA_I"/>
</dbReference>
<dbReference type="InterPro" id="IPR012340">
    <property type="entry name" value="NA-bd_OB-fold"/>
</dbReference>
<dbReference type="InterPro" id="IPR000085">
    <property type="entry name" value="RuvA"/>
</dbReference>
<dbReference type="InterPro" id="IPR010994">
    <property type="entry name" value="RuvA_2-like"/>
</dbReference>
<dbReference type="InterPro" id="IPR011114">
    <property type="entry name" value="RuvA_C"/>
</dbReference>
<dbReference type="NCBIfam" id="TIGR00084">
    <property type="entry name" value="ruvA"/>
    <property type="match status" value="1"/>
</dbReference>
<dbReference type="Pfam" id="PF01330">
    <property type="entry name" value="RuvA_N"/>
    <property type="match status" value="1"/>
</dbReference>
<dbReference type="SUPFAM" id="SSF50249">
    <property type="entry name" value="Nucleic acid-binding proteins"/>
    <property type="match status" value="1"/>
</dbReference>
<dbReference type="SUPFAM" id="SSF47781">
    <property type="entry name" value="RuvA domain 2-like"/>
    <property type="match status" value="1"/>
</dbReference>
<organism>
    <name type="scientific">Desulfosudis oleivorans (strain DSM 6200 / JCM 39069 / Hxd3)</name>
    <name type="common">Desulfococcus oleovorans</name>
    <dbReference type="NCBI Taxonomy" id="96561"/>
    <lineage>
        <taxon>Bacteria</taxon>
        <taxon>Pseudomonadati</taxon>
        <taxon>Thermodesulfobacteriota</taxon>
        <taxon>Desulfobacteria</taxon>
        <taxon>Desulfobacterales</taxon>
        <taxon>Desulfosudaceae</taxon>
        <taxon>Desulfosudis</taxon>
    </lineage>
</organism>
<name>RUVA_DESOH</name>
<protein>
    <recommendedName>
        <fullName evidence="1">Holliday junction branch migration complex subunit RuvA</fullName>
    </recommendedName>
</protein>
<keyword id="KW-0963">Cytoplasm</keyword>
<keyword id="KW-0227">DNA damage</keyword>
<keyword id="KW-0233">DNA recombination</keyword>
<keyword id="KW-0234">DNA repair</keyword>
<keyword id="KW-0238">DNA-binding</keyword>
<keyword id="KW-1185">Reference proteome</keyword>
<comment type="function">
    <text evidence="1">The RuvA-RuvB-RuvC complex processes Holliday junction (HJ) DNA during genetic recombination and DNA repair, while the RuvA-RuvB complex plays an important role in the rescue of blocked DNA replication forks via replication fork reversal (RFR). RuvA specifically binds to HJ cruciform DNA, conferring on it an open structure. The RuvB hexamer acts as an ATP-dependent pump, pulling dsDNA into and through the RuvAB complex. HJ branch migration allows RuvC to scan DNA until it finds its consensus sequence, where it cleaves and resolves the cruciform DNA.</text>
</comment>
<comment type="subunit">
    <text evidence="1">Homotetramer. Forms an RuvA(8)-RuvB(12)-Holliday junction (HJ) complex. HJ DNA is sandwiched between 2 RuvA tetramers; dsDNA enters through RuvA and exits via RuvB. An RuvB hexamer assembles on each DNA strand where it exits the tetramer. Each RuvB hexamer is contacted by two RuvA subunits (via domain III) on 2 adjacent RuvB subunits; this complex drives branch migration. In the full resolvosome a probable DNA-RuvA(4)-RuvB(12)-RuvC(2) complex forms which resolves the HJ.</text>
</comment>
<comment type="subcellular location">
    <subcellularLocation>
        <location evidence="1">Cytoplasm</location>
    </subcellularLocation>
</comment>
<comment type="domain">
    <text evidence="1">Has three domains with a flexible linker between the domains II and III and assumes an 'L' shape. Domain III is highly mobile and contacts RuvB.</text>
</comment>
<comment type="similarity">
    <text evidence="1">Belongs to the RuvA family.</text>
</comment>
<sequence length="205" mass="22102">MIGYLEGTLLKKKEDRILLLAGPVGYEVLLPAVVMASLQGKREGDPLFFHIYHYQTERQPKPVLIGFNTEEEKDFFHLLITVEAIGPLKAVQCLTLPIGEVAEAIETGNSALLGQLKGVGGRTAQKMIATLKGKVGRFADAGHSSAPDVPVTGSLADQTVEVLVGQLGYKPNEARLMVAGALKRNPDVSTPEALFDEIFKHGQAQ</sequence>
<accession>A8ZUH8</accession>
<gene>
    <name evidence="1" type="primary">ruvA</name>
    <name type="ordered locus">Dole_2206</name>
</gene>
<evidence type="ECO:0000255" key="1">
    <source>
        <dbReference type="HAMAP-Rule" id="MF_00031"/>
    </source>
</evidence>
<proteinExistence type="inferred from homology"/>
<feature type="chain" id="PRO_1000195135" description="Holliday junction branch migration complex subunit RuvA">
    <location>
        <begin position="1"/>
        <end position="205"/>
    </location>
</feature>
<feature type="region of interest" description="Domain I" evidence="1">
    <location>
        <begin position="1"/>
        <end position="68"/>
    </location>
</feature>
<feature type="region of interest" description="Domain II" evidence="1">
    <location>
        <begin position="69"/>
        <end position="146"/>
    </location>
</feature>
<feature type="region of interest" description="Flexible linker" evidence="1">
    <location>
        <begin position="147"/>
        <end position="151"/>
    </location>
</feature>
<feature type="region of interest" description="Domain III" evidence="1">
    <location>
        <begin position="152"/>
        <end position="205"/>
    </location>
</feature>
<reference key="1">
    <citation type="submission" date="2007-10" db="EMBL/GenBank/DDBJ databases">
        <title>Complete sequence of Desulfococcus oleovorans Hxd3.</title>
        <authorList>
            <consortium name="US DOE Joint Genome Institute"/>
            <person name="Copeland A."/>
            <person name="Lucas S."/>
            <person name="Lapidus A."/>
            <person name="Barry K."/>
            <person name="Glavina del Rio T."/>
            <person name="Dalin E."/>
            <person name="Tice H."/>
            <person name="Pitluck S."/>
            <person name="Kiss H."/>
            <person name="Brettin T."/>
            <person name="Bruce D."/>
            <person name="Detter J.C."/>
            <person name="Han C."/>
            <person name="Schmutz J."/>
            <person name="Larimer F."/>
            <person name="Land M."/>
            <person name="Hauser L."/>
            <person name="Kyrpides N."/>
            <person name="Kim E."/>
            <person name="Wawrik B."/>
            <person name="Richardson P."/>
        </authorList>
    </citation>
    <scope>NUCLEOTIDE SEQUENCE [LARGE SCALE GENOMIC DNA]</scope>
    <source>
        <strain>DSM 6200 / JCM 39069 / Hxd3</strain>
    </source>
</reference>